<evidence type="ECO:0000250" key="1">
    <source>
        <dbReference type="UniProtKB" id="P40045"/>
    </source>
</evidence>
<evidence type="ECO:0000305" key="2"/>
<gene>
    <name type="primary">TDA2</name>
    <name type="ORF">VL3_1343</name>
</gene>
<name>TDA2_YEASZ</name>
<sequence>MQIEIKDGRSDNSPLPERKLVTLIQESYDSLKDDNEINLSTESTSNLLIKLVLEKLEKHSSLYKYIASVTTLNIEGLNEENANFSLKNDIGASWESKKRWYIQL</sequence>
<comment type="subcellular location">
    <subcellularLocation>
        <location evidence="1">Cytoplasm</location>
    </subcellularLocation>
    <subcellularLocation>
        <location evidence="1">Cell projection</location>
    </subcellularLocation>
    <text evidence="1">Concentrates at cytoplasmic punctate structures and localizes at the mating projection tip.</text>
</comment>
<comment type="similarity">
    <text evidence="2">Belongs to the TDA2 family.</text>
</comment>
<accession>E7QDX3</accession>
<organism>
    <name type="scientific">Saccharomyces cerevisiae (strain Zymaflore VL3)</name>
    <name type="common">Baker's yeast</name>
    <dbReference type="NCBI Taxonomy" id="764100"/>
    <lineage>
        <taxon>Eukaryota</taxon>
        <taxon>Fungi</taxon>
        <taxon>Dikarya</taxon>
        <taxon>Ascomycota</taxon>
        <taxon>Saccharomycotina</taxon>
        <taxon>Saccharomycetes</taxon>
        <taxon>Saccharomycetales</taxon>
        <taxon>Saccharomycetaceae</taxon>
        <taxon>Saccharomyces</taxon>
    </lineage>
</organism>
<dbReference type="EMBL" id="AEJS01000026">
    <property type="protein sequence ID" value="EGA87097.1"/>
    <property type="molecule type" value="Genomic_DNA"/>
</dbReference>
<dbReference type="SMR" id="E7QDX3"/>
<dbReference type="HOGENOM" id="CLU_137494_1_0_1"/>
<dbReference type="OrthoDB" id="10059120at2759"/>
<dbReference type="GO" id="GO:0042995">
    <property type="term" value="C:cell projection"/>
    <property type="evidence" value="ECO:0007669"/>
    <property type="project" value="UniProtKB-SubCell"/>
</dbReference>
<dbReference type="GO" id="GO:0005737">
    <property type="term" value="C:cytoplasm"/>
    <property type="evidence" value="ECO:0007669"/>
    <property type="project" value="UniProtKB-SubCell"/>
</dbReference>
<feature type="chain" id="PRO_0000410743" description="Topoisomerase I damage affected protein 2">
    <location>
        <begin position="1"/>
        <end position="104"/>
    </location>
</feature>
<protein>
    <recommendedName>
        <fullName>Topoisomerase I damage affected protein 2</fullName>
    </recommendedName>
</protein>
<keyword id="KW-0966">Cell projection</keyword>
<keyword id="KW-0963">Cytoplasm</keyword>
<proteinExistence type="inferred from homology"/>
<reference key="1">
    <citation type="journal article" date="2011" name="PLoS Genet.">
        <title>Whole-genome comparison reveals novel genetic elements that characterize the genome of industrial strains of Saccharomyces cerevisiae.</title>
        <authorList>
            <person name="Borneman A.R."/>
            <person name="Desany B.A."/>
            <person name="Riches D."/>
            <person name="Affourtit J.P."/>
            <person name="Forgan A.H."/>
            <person name="Pretorius I.S."/>
            <person name="Egholm M."/>
            <person name="Chambers P.J."/>
        </authorList>
    </citation>
    <scope>NUCLEOTIDE SEQUENCE [LARGE SCALE GENOMIC DNA]</scope>
    <source>
        <strain>Zymaflore VL3</strain>
    </source>
</reference>